<comment type="function">
    <text evidence="1">One of the proteins required for the normal export of preproteins out of the cell cytoplasm. It is a molecular chaperone that binds to a subset of precursor proteins, maintaining them in a translocation-competent state. It also specifically binds to its receptor SecA.</text>
</comment>
<comment type="subunit">
    <text evidence="1">Homotetramer, a dimer of dimers. One homotetramer interacts with 1 SecA dimer.</text>
</comment>
<comment type="subcellular location">
    <subcellularLocation>
        <location evidence="1">Cytoplasm</location>
    </subcellularLocation>
</comment>
<comment type="similarity">
    <text evidence="1">Belongs to the SecB family.</text>
</comment>
<name>SECB_NEIMA</name>
<proteinExistence type="inferred from homology"/>
<sequence>MSEELQPVFSIERLYVKDLSLEVPHAPQIFLEQGEPEVDMRVSTGSQKLEDGYYNVDVTVTVTAKLDNERTMFLNEVTQSGIFRLENIPEEDADLLLGVACPNILFPYAREAVSGTVTRAGFPPVLLAPINFEAIYQQQQEAEAAGA</sequence>
<dbReference type="EMBL" id="AL157959">
    <property type="protein sequence ID" value="CAM07934.1"/>
    <property type="molecule type" value="Genomic_DNA"/>
</dbReference>
<dbReference type="PIR" id="G81987">
    <property type="entry name" value="G81987"/>
</dbReference>
<dbReference type="RefSeq" id="WP_002226664.1">
    <property type="nucleotide sequence ID" value="NC_003116.1"/>
</dbReference>
<dbReference type="SMR" id="Q9JVU8"/>
<dbReference type="EnsemblBacteria" id="CAM07934">
    <property type="protein sequence ID" value="CAM07934"/>
    <property type="gene ID" value="NMA0674"/>
</dbReference>
<dbReference type="GeneID" id="93386691"/>
<dbReference type="KEGG" id="nma:NMA0674"/>
<dbReference type="HOGENOM" id="CLU_111574_1_0_4"/>
<dbReference type="Proteomes" id="UP000000626">
    <property type="component" value="Chromosome"/>
</dbReference>
<dbReference type="GO" id="GO:0005737">
    <property type="term" value="C:cytoplasm"/>
    <property type="evidence" value="ECO:0007669"/>
    <property type="project" value="UniProtKB-SubCell"/>
</dbReference>
<dbReference type="GO" id="GO:0051082">
    <property type="term" value="F:unfolded protein binding"/>
    <property type="evidence" value="ECO:0007669"/>
    <property type="project" value="InterPro"/>
</dbReference>
<dbReference type="GO" id="GO:0006457">
    <property type="term" value="P:protein folding"/>
    <property type="evidence" value="ECO:0007669"/>
    <property type="project" value="UniProtKB-UniRule"/>
</dbReference>
<dbReference type="GO" id="GO:0051262">
    <property type="term" value="P:protein tetramerization"/>
    <property type="evidence" value="ECO:0007669"/>
    <property type="project" value="InterPro"/>
</dbReference>
<dbReference type="GO" id="GO:0015031">
    <property type="term" value="P:protein transport"/>
    <property type="evidence" value="ECO:0007669"/>
    <property type="project" value="UniProtKB-UniRule"/>
</dbReference>
<dbReference type="Gene3D" id="3.10.420.10">
    <property type="entry name" value="SecB-like"/>
    <property type="match status" value="1"/>
</dbReference>
<dbReference type="HAMAP" id="MF_00821">
    <property type="entry name" value="SecB"/>
    <property type="match status" value="1"/>
</dbReference>
<dbReference type="InterPro" id="IPR003708">
    <property type="entry name" value="SecB"/>
</dbReference>
<dbReference type="InterPro" id="IPR035958">
    <property type="entry name" value="SecB-like_sf"/>
</dbReference>
<dbReference type="NCBIfam" id="NF004394">
    <property type="entry name" value="PRK05751.1-5"/>
    <property type="match status" value="1"/>
</dbReference>
<dbReference type="NCBIfam" id="TIGR00809">
    <property type="entry name" value="secB"/>
    <property type="match status" value="1"/>
</dbReference>
<dbReference type="PANTHER" id="PTHR36918">
    <property type="match status" value="1"/>
</dbReference>
<dbReference type="PANTHER" id="PTHR36918:SF1">
    <property type="entry name" value="PROTEIN-EXPORT PROTEIN SECB"/>
    <property type="match status" value="1"/>
</dbReference>
<dbReference type="Pfam" id="PF02556">
    <property type="entry name" value="SecB"/>
    <property type="match status" value="1"/>
</dbReference>
<dbReference type="PRINTS" id="PR01594">
    <property type="entry name" value="SECBCHAPRONE"/>
</dbReference>
<dbReference type="SUPFAM" id="SSF54611">
    <property type="entry name" value="SecB-like"/>
    <property type="match status" value="1"/>
</dbReference>
<keyword id="KW-0143">Chaperone</keyword>
<keyword id="KW-0963">Cytoplasm</keyword>
<keyword id="KW-0653">Protein transport</keyword>
<keyword id="KW-0811">Translocation</keyword>
<keyword id="KW-0813">Transport</keyword>
<organism>
    <name type="scientific">Neisseria meningitidis serogroup A / serotype 4A (strain DSM 15465 / Z2491)</name>
    <dbReference type="NCBI Taxonomy" id="122587"/>
    <lineage>
        <taxon>Bacteria</taxon>
        <taxon>Pseudomonadati</taxon>
        <taxon>Pseudomonadota</taxon>
        <taxon>Betaproteobacteria</taxon>
        <taxon>Neisseriales</taxon>
        <taxon>Neisseriaceae</taxon>
        <taxon>Neisseria</taxon>
    </lineage>
</organism>
<protein>
    <recommendedName>
        <fullName evidence="1">Protein-export protein SecB</fullName>
    </recommendedName>
</protein>
<feature type="chain" id="PRO_0000055387" description="Protein-export protein SecB">
    <location>
        <begin position="1"/>
        <end position="147"/>
    </location>
</feature>
<gene>
    <name evidence="1" type="primary">secB</name>
    <name type="ordered locus">NMA0674</name>
</gene>
<accession>Q9JVU8</accession>
<accession>A1IQA5</accession>
<reference key="1">
    <citation type="journal article" date="2000" name="Nature">
        <title>Complete DNA sequence of a serogroup A strain of Neisseria meningitidis Z2491.</title>
        <authorList>
            <person name="Parkhill J."/>
            <person name="Achtman M."/>
            <person name="James K.D."/>
            <person name="Bentley S.D."/>
            <person name="Churcher C.M."/>
            <person name="Klee S.R."/>
            <person name="Morelli G."/>
            <person name="Basham D."/>
            <person name="Brown D."/>
            <person name="Chillingworth T."/>
            <person name="Davies R.M."/>
            <person name="Davis P."/>
            <person name="Devlin K."/>
            <person name="Feltwell T."/>
            <person name="Hamlin N."/>
            <person name="Holroyd S."/>
            <person name="Jagels K."/>
            <person name="Leather S."/>
            <person name="Moule S."/>
            <person name="Mungall K.L."/>
            <person name="Quail M.A."/>
            <person name="Rajandream M.A."/>
            <person name="Rutherford K.M."/>
            <person name="Simmonds M."/>
            <person name="Skelton J."/>
            <person name="Whitehead S."/>
            <person name="Spratt B.G."/>
            <person name="Barrell B.G."/>
        </authorList>
    </citation>
    <scope>NUCLEOTIDE SEQUENCE [LARGE SCALE GENOMIC DNA]</scope>
    <source>
        <strain>DSM 15465 / Z2491</strain>
    </source>
</reference>
<evidence type="ECO:0000255" key="1">
    <source>
        <dbReference type="HAMAP-Rule" id="MF_00821"/>
    </source>
</evidence>